<accession>A1RC68</accession>
<protein>
    <recommendedName>
        <fullName evidence="1">Small ribosomal subunit protein bS18</fullName>
    </recommendedName>
    <alternativeName>
        <fullName evidence="2">30S ribosomal protein S18</fullName>
    </alternativeName>
</protein>
<sequence>MAKAELRKPKPKSNPLKAADITVIDYKDVALLRKFISDRGKIRARRVTGVTVQEQRKIAQAIKNAREVALLPYSGAGRG</sequence>
<keyword id="KW-0687">Ribonucleoprotein</keyword>
<keyword id="KW-0689">Ribosomal protein</keyword>
<keyword id="KW-0694">RNA-binding</keyword>
<keyword id="KW-0699">rRNA-binding</keyword>
<proteinExistence type="inferred from homology"/>
<organism>
    <name type="scientific">Paenarthrobacter aurescens (strain TC1)</name>
    <dbReference type="NCBI Taxonomy" id="290340"/>
    <lineage>
        <taxon>Bacteria</taxon>
        <taxon>Bacillati</taxon>
        <taxon>Actinomycetota</taxon>
        <taxon>Actinomycetes</taxon>
        <taxon>Micrococcales</taxon>
        <taxon>Micrococcaceae</taxon>
        <taxon>Paenarthrobacter</taxon>
    </lineage>
</organism>
<gene>
    <name evidence="1" type="primary">rpsR</name>
    <name type="ordered locus">AAur_4163</name>
</gene>
<reference key="1">
    <citation type="journal article" date="2006" name="PLoS Genet.">
        <title>Secrets of soil survival revealed by the genome sequence of Arthrobacter aurescens TC1.</title>
        <authorList>
            <person name="Mongodin E.F."/>
            <person name="Shapir N."/>
            <person name="Daugherty S.C."/>
            <person name="DeBoy R.T."/>
            <person name="Emerson J.B."/>
            <person name="Shvartzbeyn A."/>
            <person name="Radune D."/>
            <person name="Vamathevan J."/>
            <person name="Riggs F."/>
            <person name="Grinberg V."/>
            <person name="Khouri H.M."/>
            <person name="Wackett L.P."/>
            <person name="Nelson K.E."/>
            <person name="Sadowsky M.J."/>
        </authorList>
    </citation>
    <scope>NUCLEOTIDE SEQUENCE [LARGE SCALE GENOMIC DNA]</scope>
    <source>
        <strain>TC1</strain>
    </source>
</reference>
<name>RS18_PAEAT</name>
<comment type="function">
    <text evidence="1">Binds as a heterodimer with protein bS6 to the central domain of the 16S rRNA, where it helps stabilize the platform of the 30S subunit.</text>
</comment>
<comment type="subunit">
    <text evidence="1">Part of the 30S ribosomal subunit. Forms a tight heterodimer with protein bS6.</text>
</comment>
<comment type="similarity">
    <text evidence="1">Belongs to the bacterial ribosomal protein bS18 family.</text>
</comment>
<dbReference type="EMBL" id="CP000474">
    <property type="protein sequence ID" value="ABM06809.1"/>
    <property type="molecule type" value="Genomic_DNA"/>
</dbReference>
<dbReference type="RefSeq" id="WP_003800144.1">
    <property type="nucleotide sequence ID" value="NC_008711.1"/>
</dbReference>
<dbReference type="SMR" id="A1RC68"/>
<dbReference type="STRING" id="290340.AAur_4163"/>
<dbReference type="GeneID" id="97423433"/>
<dbReference type="KEGG" id="aau:AAur_4163"/>
<dbReference type="eggNOG" id="COG0238">
    <property type="taxonomic scope" value="Bacteria"/>
</dbReference>
<dbReference type="HOGENOM" id="CLU_148710_1_0_11"/>
<dbReference type="OrthoDB" id="9812008at2"/>
<dbReference type="Proteomes" id="UP000000637">
    <property type="component" value="Chromosome"/>
</dbReference>
<dbReference type="GO" id="GO:0022627">
    <property type="term" value="C:cytosolic small ribosomal subunit"/>
    <property type="evidence" value="ECO:0007669"/>
    <property type="project" value="TreeGrafter"/>
</dbReference>
<dbReference type="GO" id="GO:0070181">
    <property type="term" value="F:small ribosomal subunit rRNA binding"/>
    <property type="evidence" value="ECO:0007669"/>
    <property type="project" value="TreeGrafter"/>
</dbReference>
<dbReference type="GO" id="GO:0003735">
    <property type="term" value="F:structural constituent of ribosome"/>
    <property type="evidence" value="ECO:0007669"/>
    <property type="project" value="InterPro"/>
</dbReference>
<dbReference type="GO" id="GO:0006412">
    <property type="term" value="P:translation"/>
    <property type="evidence" value="ECO:0007669"/>
    <property type="project" value="UniProtKB-UniRule"/>
</dbReference>
<dbReference type="Gene3D" id="4.10.640.10">
    <property type="entry name" value="Ribosomal protein S18"/>
    <property type="match status" value="1"/>
</dbReference>
<dbReference type="HAMAP" id="MF_00270">
    <property type="entry name" value="Ribosomal_bS18"/>
    <property type="match status" value="1"/>
</dbReference>
<dbReference type="InterPro" id="IPR001648">
    <property type="entry name" value="Ribosomal_bS18"/>
</dbReference>
<dbReference type="InterPro" id="IPR018275">
    <property type="entry name" value="Ribosomal_bS18_CS"/>
</dbReference>
<dbReference type="InterPro" id="IPR036870">
    <property type="entry name" value="Ribosomal_bS18_sf"/>
</dbReference>
<dbReference type="NCBIfam" id="TIGR00165">
    <property type="entry name" value="S18"/>
    <property type="match status" value="1"/>
</dbReference>
<dbReference type="PANTHER" id="PTHR13479">
    <property type="entry name" value="30S RIBOSOMAL PROTEIN S18"/>
    <property type="match status" value="1"/>
</dbReference>
<dbReference type="PANTHER" id="PTHR13479:SF40">
    <property type="entry name" value="SMALL RIBOSOMAL SUBUNIT PROTEIN BS18M"/>
    <property type="match status" value="1"/>
</dbReference>
<dbReference type="Pfam" id="PF01084">
    <property type="entry name" value="Ribosomal_S18"/>
    <property type="match status" value="1"/>
</dbReference>
<dbReference type="PRINTS" id="PR00974">
    <property type="entry name" value="RIBOSOMALS18"/>
</dbReference>
<dbReference type="SUPFAM" id="SSF46911">
    <property type="entry name" value="Ribosomal protein S18"/>
    <property type="match status" value="1"/>
</dbReference>
<dbReference type="PROSITE" id="PS00057">
    <property type="entry name" value="RIBOSOMAL_S18"/>
    <property type="match status" value="1"/>
</dbReference>
<evidence type="ECO:0000255" key="1">
    <source>
        <dbReference type="HAMAP-Rule" id="MF_00270"/>
    </source>
</evidence>
<evidence type="ECO:0000305" key="2"/>
<feature type="chain" id="PRO_0000345440" description="Small ribosomal subunit protein bS18">
    <location>
        <begin position="1"/>
        <end position="79"/>
    </location>
</feature>